<keyword id="KW-0056">Arginine metabolism</keyword>
<keyword id="KW-0520">NAD</keyword>
<keyword id="KW-0560">Oxidoreductase</keyword>
<keyword id="KW-1185">Reference proteome</keyword>
<reference key="1">
    <citation type="journal article" date="2008" name="Environ. Microbiol.">
        <title>The genome of Erwinia tasmaniensis strain Et1/99, a non-pathogenic bacterium in the genus Erwinia.</title>
        <authorList>
            <person name="Kube M."/>
            <person name="Migdoll A.M."/>
            <person name="Mueller I."/>
            <person name="Kuhl H."/>
            <person name="Beck A."/>
            <person name="Reinhardt R."/>
            <person name="Geider K."/>
        </authorList>
    </citation>
    <scope>NUCLEOTIDE SEQUENCE [LARGE SCALE GENOMIC DNA]</scope>
    <source>
        <strain>DSM 17950 / CFBP 7177 / CIP 109463 / NCPPB 4357 / Et1/99</strain>
    </source>
</reference>
<feature type="chain" id="PRO_1000138049" description="N-succinylglutamate 5-semialdehyde dehydrogenase">
    <location>
        <begin position="1"/>
        <end position="489"/>
    </location>
</feature>
<feature type="active site" evidence="1">
    <location>
        <position position="239"/>
    </location>
</feature>
<feature type="active site" evidence="1">
    <location>
        <position position="273"/>
    </location>
</feature>
<feature type="binding site" evidence="1">
    <location>
        <begin position="216"/>
        <end position="221"/>
    </location>
    <ligand>
        <name>NAD(+)</name>
        <dbReference type="ChEBI" id="CHEBI:57540"/>
    </ligand>
</feature>
<sequence length="489" mass="52719">MTHCINGQWLAGEGETVIKTDPVSGEVLWQGRGASAAQVAAACEAARGAFPAWARQPFAERQAIVEKFAALLDTNRVELSEAIARETGKPRWETQTEVQAMINKVAISLRAWHVRCPEQVEGESSVRHRPHGVMAVFGPYNFPGHLPNGHIVPALLAGNCVLFKPSELTPLTAEIAMRLWNHAGLPQGVLHLLQGGRETGQALVQQPQVDGILFTGSAATGYQLHRQLAGQPEKMLALEMGGNNALIVEDPDDIDAAVHIAIQSAFISAGQRCTCARRLLVRRGAAGDAFLARLAAVAATIRVGRWNDEPQPFMGSVISPQAAEKIYAEWQARIDAGGNVLLPMCWPERSSALLTPGIIDVTEVRDLPDEEIFGPLLQVMRYDDFTHAIQLANDTRYGLACGLISPQREKFDRLLVEARAGIVNWNKPLTGAASTAPFGGVGASGNHRPSAWYAADYCAWPMASLASADLSLPDTLSPGLDFSVNKEAE</sequence>
<proteinExistence type="inferred from homology"/>
<comment type="function">
    <text evidence="1">Catalyzes the NAD-dependent reduction of succinylglutamate semialdehyde into succinylglutamate.</text>
</comment>
<comment type="catalytic activity">
    <reaction evidence="1">
        <text>N-succinyl-L-glutamate 5-semialdehyde + NAD(+) + H2O = N-succinyl-L-glutamate + NADH + 2 H(+)</text>
        <dbReference type="Rhea" id="RHEA:10812"/>
        <dbReference type="ChEBI" id="CHEBI:15377"/>
        <dbReference type="ChEBI" id="CHEBI:15378"/>
        <dbReference type="ChEBI" id="CHEBI:57540"/>
        <dbReference type="ChEBI" id="CHEBI:57945"/>
        <dbReference type="ChEBI" id="CHEBI:58520"/>
        <dbReference type="ChEBI" id="CHEBI:58763"/>
        <dbReference type="EC" id="1.2.1.71"/>
    </reaction>
</comment>
<comment type="pathway">
    <text evidence="1">Amino-acid degradation; L-arginine degradation via AST pathway; L-glutamate and succinate from L-arginine: step 4/5.</text>
</comment>
<comment type="similarity">
    <text evidence="1">Belongs to the aldehyde dehydrogenase family. AstD subfamily.</text>
</comment>
<dbReference type="EC" id="1.2.1.71" evidence="1"/>
<dbReference type="EMBL" id="CU468135">
    <property type="protein sequence ID" value="CAO96903.1"/>
    <property type="molecule type" value="Genomic_DNA"/>
</dbReference>
<dbReference type="RefSeq" id="WP_012441587.1">
    <property type="nucleotide sequence ID" value="NC_010694.1"/>
</dbReference>
<dbReference type="SMR" id="B2VJX8"/>
<dbReference type="STRING" id="465817.ETA_18570"/>
<dbReference type="KEGG" id="eta:ETA_18570"/>
<dbReference type="eggNOG" id="COG1012">
    <property type="taxonomic scope" value="Bacteria"/>
</dbReference>
<dbReference type="HOGENOM" id="CLU_005391_1_0_6"/>
<dbReference type="OrthoDB" id="9812625at2"/>
<dbReference type="UniPathway" id="UPA00185">
    <property type="reaction ID" value="UER00282"/>
</dbReference>
<dbReference type="Proteomes" id="UP000001726">
    <property type="component" value="Chromosome"/>
</dbReference>
<dbReference type="GO" id="GO:0043824">
    <property type="term" value="F:succinylglutamate-semialdehyde dehydrogenase activity"/>
    <property type="evidence" value="ECO:0007669"/>
    <property type="project" value="UniProtKB-EC"/>
</dbReference>
<dbReference type="GO" id="GO:0019544">
    <property type="term" value="P:arginine catabolic process to glutamate"/>
    <property type="evidence" value="ECO:0007669"/>
    <property type="project" value="UniProtKB-UniRule"/>
</dbReference>
<dbReference type="GO" id="GO:0019545">
    <property type="term" value="P:arginine catabolic process to succinate"/>
    <property type="evidence" value="ECO:0007669"/>
    <property type="project" value="UniProtKB-UniRule"/>
</dbReference>
<dbReference type="CDD" id="cd07095">
    <property type="entry name" value="ALDH_SGSD_AstD"/>
    <property type="match status" value="1"/>
</dbReference>
<dbReference type="FunFam" id="3.40.309.10:FF:000013">
    <property type="entry name" value="N-succinylglutamate 5-semialdehyde dehydrogenase"/>
    <property type="match status" value="1"/>
</dbReference>
<dbReference type="FunFam" id="3.40.605.10:FF:000010">
    <property type="entry name" value="N-succinylglutamate 5-semialdehyde dehydrogenase"/>
    <property type="match status" value="1"/>
</dbReference>
<dbReference type="Gene3D" id="3.40.605.10">
    <property type="entry name" value="Aldehyde Dehydrogenase, Chain A, domain 1"/>
    <property type="match status" value="1"/>
</dbReference>
<dbReference type="Gene3D" id="3.40.309.10">
    <property type="entry name" value="Aldehyde Dehydrogenase, Chain A, domain 2"/>
    <property type="match status" value="1"/>
</dbReference>
<dbReference type="HAMAP" id="MF_01174">
    <property type="entry name" value="Aldedh_AstD"/>
    <property type="match status" value="1"/>
</dbReference>
<dbReference type="InterPro" id="IPR016161">
    <property type="entry name" value="Ald_DH/histidinol_DH"/>
</dbReference>
<dbReference type="InterPro" id="IPR016163">
    <property type="entry name" value="Ald_DH_C"/>
</dbReference>
<dbReference type="InterPro" id="IPR016160">
    <property type="entry name" value="Ald_DH_CS_CYS"/>
</dbReference>
<dbReference type="InterPro" id="IPR029510">
    <property type="entry name" value="Ald_DH_CS_GLU"/>
</dbReference>
<dbReference type="InterPro" id="IPR016162">
    <property type="entry name" value="Ald_DH_N"/>
</dbReference>
<dbReference type="InterPro" id="IPR015590">
    <property type="entry name" value="Aldehyde_DH_dom"/>
</dbReference>
<dbReference type="InterPro" id="IPR017649">
    <property type="entry name" value="SuccinylGlu_semiald_DH_AstD"/>
</dbReference>
<dbReference type="NCBIfam" id="TIGR03240">
    <property type="entry name" value="arg_catab_astD"/>
    <property type="match status" value="1"/>
</dbReference>
<dbReference type="NCBIfam" id="NF006992">
    <property type="entry name" value="PRK09457.1"/>
    <property type="match status" value="1"/>
</dbReference>
<dbReference type="PANTHER" id="PTHR11699">
    <property type="entry name" value="ALDEHYDE DEHYDROGENASE-RELATED"/>
    <property type="match status" value="1"/>
</dbReference>
<dbReference type="Pfam" id="PF00171">
    <property type="entry name" value="Aldedh"/>
    <property type="match status" value="1"/>
</dbReference>
<dbReference type="SUPFAM" id="SSF53720">
    <property type="entry name" value="ALDH-like"/>
    <property type="match status" value="1"/>
</dbReference>
<dbReference type="PROSITE" id="PS00070">
    <property type="entry name" value="ALDEHYDE_DEHYDR_CYS"/>
    <property type="match status" value="1"/>
</dbReference>
<dbReference type="PROSITE" id="PS00687">
    <property type="entry name" value="ALDEHYDE_DEHYDR_GLU"/>
    <property type="match status" value="1"/>
</dbReference>
<gene>
    <name evidence="1" type="primary">astD</name>
    <name type="ordered locus">ETA_18570</name>
</gene>
<organism>
    <name type="scientific">Erwinia tasmaniensis (strain DSM 17950 / CFBP 7177 / CIP 109463 / NCPPB 4357 / Et1/99)</name>
    <dbReference type="NCBI Taxonomy" id="465817"/>
    <lineage>
        <taxon>Bacteria</taxon>
        <taxon>Pseudomonadati</taxon>
        <taxon>Pseudomonadota</taxon>
        <taxon>Gammaproteobacteria</taxon>
        <taxon>Enterobacterales</taxon>
        <taxon>Erwiniaceae</taxon>
        <taxon>Erwinia</taxon>
    </lineage>
</organism>
<name>ASTD_ERWT9</name>
<evidence type="ECO:0000255" key="1">
    <source>
        <dbReference type="HAMAP-Rule" id="MF_01174"/>
    </source>
</evidence>
<accession>B2VJX8</accession>
<protein>
    <recommendedName>
        <fullName evidence="1">N-succinylglutamate 5-semialdehyde dehydrogenase</fullName>
        <ecNumber evidence="1">1.2.1.71</ecNumber>
    </recommendedName>
    <alternativeName>
        <fullName evidence="1">Succinylglutamic semialdehyde dehydrogenase</fullName>
        <shortName evidence="1">SGSD</shortName>
    </alternativeName>
</protein>